<evidence type="ECO:0000255" key="1">
    <source>
        <dbReference type="HAMAP-Rule" id="MF_01691"/>
    </source>
</evidence>
<protein>
    <recommendedName>
        <fullName evidence="1">2,3,4,5-tetrahydropyridine-2,6-dicarboxylate N-acetyltransferase</fullName>
        <ecNumber evidence="1">2.3.1.89</ecNumber>
    </recommendedName>
    <alternativeName>
        <fullName evidence="1">Tetrahydrodipicolinate N-acetyltransferase</fullName>
        <shortName evidence="1">THP acetyltransferase</shortName>
        <shortName evidence="1">Tetrahydropicolinate acetylase</shortName>
    </alternativeName>
</protein>
<sequence>MTQAQKLSAQEIIQFIGNAEKKTQVKVTLSGMPSFKSAGFLAENGRPNFKALANKGIQVLGDFHTHYSLKIIIGDWQAVRPLLEGLTENKDYTIEFEGRNSAVPLLDTRAINARIEPGAIIRDQVMIGDNAVIMMGAIINIGAEIGEGTMIDMGAVLGGRATVGKNSHIGAGAVLAGVIEPASAEPVRVGDNVLVGANAVVIEGVQVGSGSVVAAGAIVTQDVPENVVVAGVPARTIKEIDEKTAQKTALEDALRNL</sequence>
<proteinExistence type="inferred from homology"/>
<keyword id="KW-0012">Acyltransferase</keyword>
<keyword id="KW-0028">Amino-acid biosynthesis</keyword>
<keyword id="KW-0220">Diaminopimelate biosynthesis</keyword>
<keyword id="KW-0457">Lysine biosynthesis</keyword>
<keyword id="KW-0677">Repeat</keyword>
<keyword id="KW-0808">Transferase</keyword>
<organism>
    <name type="scientific">Lactococcus lactis subsp. cremoris (strain SK11)</name>
    <dbReference type="NCBI Taxonomy" id="272622"/>
    <lineage>
        <taxon>Bacteria</taxon>
        <taxon>Bacillati</taxon>
        <taxon>Bacillota</taxon>
        <taxon>Bacilli</taxon>
        <taxon>Lactobacillales</taxon>
        <taxon>Streptococcaceae</taxon>
        <taxon>Lactococcus</taxon>
        <taxon>Lactococcus cremoris subsp. cremoris</taxon>
    </lineage>
</organism>
<name>DAPH_LACLS</name>
<accession>Q032G9</accession>
<gene>
    <name evidence="1" type="primary">dapH</name>
    <name type="ordered locus">LACR_0293</name>
</gene>
<reference key="1">
    <citation type="journal article" date="2006" name="Proc. Natl. Acad. Sci. U.S.A.">
        <title>Comparative genomics of the lactic acid bacteria.</title>
        <authorList>
            <person name="Makarova K.S."/>
            <person name="Slesarev A."/>
            <person name="Wolf Y.I."/>
            <person name="Sorokin A."/>
            <person name="Mirkin B."/>
            <person name="Koonin E.V."/>
            <person name="Pavlov A."/>
            <person name="Pavlova N."/>
            <person name="Karamychev V."/>
            <person name="Polouchine N."/>
            <person name="Shakhova V."/>
            <person name="Grigoriev I."/>
            <person name="Lou Y."/>
            <person name="Rohksar D."/>
            <person name="Lucas S."/>
            <person name="Huang K."/>
            <person name="Goodstein D.M."/>
            <person name="Hawkins T."/>
            <person name="Plengvidhya V."/>
            <person name="Welker D."/>
            <person name="Hughes J."/>
            <person name="Goh Y."/>
            <person name="Benson A."/>
            <person name="Baldwin K."/>
            <person name="Lee J.-H."/>
            <person name="Diaz-Muniz I."/>
            <person name="Dosti B."/>
            <person name="Smeianov V."/>
            <person name="Wechter W."/>
            <person name="Barabote R."/>
            <person name="Lorca G."/>
            <person name="Altermann E."/>
            <person name="Barrangou R."/>
            <person name="Ganesan B."/>
            <person name="Xie Y."/>
            <person name="Rawsthorne H."/>
            <person name="Tamir D."/>
            <person name="Parker C."/>
            <person name="Breidt F."/>
            <person name="Broadbent J.R."/>
            <person name="Hutkins R."/>
            <person name="O'Sullivan D."/>
            <person name="Steele J."/>
            <person name="Unlu G."/>
            <person name="Saier M.H. Jr."/>
            <person name="Klaenhammer T."/>
            <person name="Richardson P."/>
            <person name="Kozyavkin S."/>
            <person name="Weimer B.C."/>
            <person name="Mills D.A."/>
        </authorList>
    </citation>
    <scope>NUCLEOTIDE SEQUENCE [LARGE SCALE GENOMIC DNA]</scope>
    <source>
        <strain>SK11</strain>
    </source>
</reference>
<comment type="function">
    <text evidence="1">Catalyzes the transfer of an acetyl group from acetyl-CoA to tetrahydrodipicolinate.</text>
</comment>
<comment type="catalytic activity">
    <reaction evidence="1">
        <text>(S)-2,3,4,5-tetrahydrodipicolinate + acetyl-CoA + H2O = L-2-acetamido-6-oxoheptanedioate + CoA</text>
        <dbReference type="Rhea" id="RHEA:13085"/>
        <dbReference type="ChEBI" id="CHEBI:15377"/>
        <dbReference type="ChEBI" id="CHEBI:16845"/>
        <dbReference type="ChEBI" id="CHEBI:57287"/>
        <dbReference type="ChEBI" id="CHEBI:57288"/>
        <dbReference type="ChEBI" id="CHEBI:58117"/>
        <dbReference type="EC" id="2.3.1.89"/>
    </reaction>
</comment>
<comment type="pathway">
    <text evidence="1">Amino-acid biosynthesis; L-lysine biosynthesis via DAP pathway; LL-2,6-diaminopimelate from (S)-tetrahydrodipicolinate (acetylase route): step 1/3.</text>
</comment>
<comment type="similarity">
    <text evidence="1">Belongs to the transferase hexapeptide repeat family. DapH subfamily.</text>
</comment>
<dbReference type="EC" id="2.3.1.89" evidence="1"/>
<dbReference type="EMBL" id="CP000425">
    <property type="protein sequence ID" value="ABJ71903.1"/>
    <property type="molecule type" value="Genomic_DNA"/>
</dbReference>
<dbReference type="RefSeq" id="WP_011675315.1">
    <property type="nucleotide sequence ID" value="NC_008527.1"/>
</dbReference>
<dbReference type="SMR" id="Q032G9"/>
<dbReference type="KEGG" id="llc:LACR_0293"/>
<dbReference type="HOGENOM" id="CLU_103751_0_0_9"/>
<dbReference type="UniPathway" id="UPA00034">
    <property type="reaction ID" value="UER00022"/>
</dbReference>
<dbReference type="Proteomes" id="UP000000240">
    <property type="component" value="Chromosome"/>
</dbReference>
<dbReference type="GO" id="GO:0047200">
    <property type="term" value="F:tetrahydrodipicolinate N-acetyltransferase activity"/>
    <property type="evidence" value="ECO:0007669"/>
    <property type="project" value="UniProtKB-EC"/>
</dbReference>
<dbReference type="GO" id="GO:0019877">
    <property type="term" value="P:diaminopimelate biosynthetic process"/>
    <property type="evidence" value="ECO:0007669"/>
    <property type="project" value="UniProtKB-UniRule"/>
</dbReference>
<dbReference type="GO" id="GO:0009089">
    <property type="term" value="P:lysine biosynthetic process via diaminopimelate"/>
    <property type="evidence" value="ECO:0007669"/>
    <property type="project" value="UniProtKB-UniRule"/>
</dbReference>
<dbReference type="CDD" id="cd03350">
    <property type="entry name" value="LbH_THP_succinylT"/>
    <property type="match status" value="1"/>
</dbReference>
<dbReference type="Gene3D" id="2.160.10.10">
    <property type="entry name" value="Hexapeptide repeat proteins"/>
    <property type="match status" value="1"/>
</dbReference>
<dbReference type="Gene3D" id="3.30.70.250">
    <property type="entry name" value="Malonyl-CoA ACP transacylase, ACP-binding"/>
    <property type="match status" value="1"/>
</dbReference>
<dbReference type="HAMAP" id="MF_01691">
    <property type="entry name" value="DapH"/>
    <property type="match status" value="1"/>
</dbReference>
<dbReference type="InterPro" id="IPR019873">
    <property type="entry name" value="DapH"/>
</dbReference>
<dbReference type="InterPro" id="IPR013710">
    <property type="entry name" value="DapH_N"/>
</dbReference>
<dbReference type="InterPro" id="IPR001451">
    <property type="entry name" value="Hexapep"/>
</dbReference>
<dbReference type="InterPro" id="IPR018357">
    <property type="entry name" value="Hexapep_transf_CS"/>
</dbReference>
<dbReference type="InterPro" id="IPR050179">
    <property type="entry name" value="Trans_hexapeptide_repeat"/>
</dbReference>
<dbReference type="InterPro" id="IPR011004">
    <property type="entry name" value="Trimer_LpxA-like_sf"/>
</dbReference>
<dbReference type="NCBIfam" id="TIGR03532">
    <property type="entry name" value="DapD_Ac"/>
    <property type="match status" value="1"/>
</dbReference>
<dbReference type="PANTHER" id="PTHR43300:SF10">
    <property type="entry name" value="2,3,4,5-TETRAHYDROPYRIDINE-2,6-DICARBOXYLATE N-ACETYLTRANSFERASE"/>
    <property type="match status" value="1"/>
</dbReference>
<dbReference type="PANTHER" id="PTHR43300">
    <property type="entry name" value="ACETYLTRANSFERASE"/>
    <property type="match status" value="1"/>
</dbReference>
<dbReference type="Pfam" id="PF08503">
    <property type="entry name" value="DapH_N"/>
    <property type="match status" value="1"/>
</dbReference>
<dbReference type="Pfam" id="PF00132">
    <property type="entry name" value="Hexapep"/>
    <property type="match status" value="1"/>
</dbReference>
<dbReference type="Pfam" id="PF14602">
    <property type="entry name" value="Hexapep_2"/>
    <property type="match status" value="1"/>
</dbReference>
<dbReference type="SUPFAM" id="SSF51161">
    <property type="entry name" value="Trimeric LpxA-like enzymes"/>
    <property type="match status" value="1"/>
</dbReference>
<dbReference type="PROSITE" id="PS00101">
    <property type="entry name" value="HEXAPEP_TRANSFERASES"/>
    <property type="match status" value="2"/>
</dbReference>
<feature type="chain" id="PRO_0000376672" description="2,3,4,5-tetrahydropyridine-2,6-dicarboxylate N-acetyltransferase">
    <location>
        <begin position="1"/>
        <end position="257"/>
    </location>
</feature>